<keyword id="KW-1185">Reference proteome</keyword>
<accession>P0CB24</accession>
<accession>F4JSX4</accession>
<accession>Q7XHI6</accession>
<accession>Q9SZK7</accession>
<organism>
    <name type="scientific">Arabidopsis thaliana</name>
    <name type="common">Mouse-ear cress</name>
    <dbReference type="NCBI Taxonomy" id="3702"/>
    <lineage>
        <taxon>Eukaryota</taxon>
        <taxon>Viridiplantae</taxon>
        <taxon>Streptophyta</taxon>
        <taxon>Embryophyta</taxon>
        <taxon>Tracheophyta</taxon>
        <taxon>Spermatophyta</taxon>
        <taxon>Magnoliopsida</taxon>
        <taxon>eudicotyledons</taxon>
        <taxon>Gunneridae</taxon>
        <taxon>Pentapetalae</taxon>
        <taxon>rosids</taxon>
        <taxon>malvids</taxon>
        <taxon>Brassicales</taxon>
        <taxon>Brassicaceae</taxon>
        <taxon>Camelineae</taxon>
        <taxon>Arabidopsis</taxon>
    </lineage>
</organism>
<reference key="1">
    <citation type="journal article" date="1999" name="Nature">
        <title>Sequence and analysis of chromosome 4 of the plant Arabidopsis thaliana.</title>
        <authorList>
            <person name="Mayer K.F.X."/>
            <person name="Schueller C."/>
            <person name="Wambutt R."/>
            <person name="Murphy G."/>
            <person name="Volckaert G."/>
            <person name="Pohl T."/>
            <person name="Duesterhoeft A."/>
            <person name="Stiekema W."/>
            <person name="Entian K.-D."/>
            <person name="Terryn N."/>
            <person name="Harris B."/>
            <person name="Ansorge W."/>
            <person name="Brandt P."/>
            <person name="Grivell L.A."/>
            <person name="Rieger M."/>
            <person name="Weichselgartner M."/>
            <person name="de Simone V."/>
            <person name="Obermaier B."/>
            <person name="Mache R."/>
            <person name="Mueller M."/>
            <person name="Kreis M."/>
            <person name="Delseny M."/>
            <person name="Puigdomenech P."/>
            <person name="Watson M."/>
            <person name="Schmidtheini T."/>
            <person name="Reichert B."/>
            <person name="Portetelle D."/>
            <person name="Perez-Alonso M."/>
            <person name="Boutry M."/>
            <person name="Bancroft I."/>
            <person name="Vos P."/>
            <person name="Hoheisel J."/>
            <person name="Zimmermann W."/>
            <person name="Wedler H."/>
            <person name="Ridley P."/>
            <person name="Langham S.-A."/>
            <person name="McCullagh B."/>
            <person name="Bilham L."/>
            <person name="Robben J."/>
            <person name="van der Schueren J."/>
            <person name="Grymonprez B."/>
            <person name="Chuang Y.-J."/>
            <person name="Vandenbussche F."/>
            <person name="Braeken M."/>
            <person name="Weltjens I."/>
            <person name="Voet M."/>
            <person name="Bastiaens I."/>
            <person name="Aert R."/>
            <person name="Defoor E."/>
            <person name="Weitzenegger T."/>
            <person name="Bothe G."/>
            <person name="Ramsperger U."/>
            <person name="Hilbert H."/>
            <person name="Braun M."/>
            <person name="Holzer E."/>
            <person name="Brandt A."/>
            <person name="Peters S."/>
            <person name="van Staveren M."/>
            <person name="Dirkse W."/>
            <person name="Mooijman P."/>
            <person name="Klein Lankhorst R."/>
            <person name="Rose M."/>
            <person name="Hauf J."/>
            <person name="Koetter P."/>
            <person name="Berneiser S."/>
            <person name="Hempel S."/>
            <person name="Feldpausch M."/>
            <person name="Lamberth S."/>
            <person name="Van den Daele H."/>
            <person name="De Keyser A."/>
            <person name="Buysshaert C."/>
            <person name="Gielen J."/>
            <person name="Villarroel R."/>
            <person name="De Clercq R."/>
            <person name="van Montagu M."/>
            <person name="Rogers J."/>
            <person name="Cronin A."/>
            <person name="Quail M.A."/>
            <person name="Bray-Allen S."/>
            <person name="Clark L."/>
            <person name="Doggett J."/>
            <person name="Hall S."/>
            <person name="Kay M."/>
            <person name="Lennard N."/>
            <person name="McLay K."/>
            <person name="Mayes R."/>
            <person name="Pettett A."/>
            <person name="Rajandream M.A."/>
            <person name="Lyne M."/>
            <person name="Benes V."/>
            <person name="Rechmann S."/>
            <person name="Borkova D."/>
            <person name="Bloecker H."/>
            <person name="Scharfe M."/>
            <person name="Grimm M."/>
            <person name="Loehnert T.-H."/>
            <person name="Dose S."/>
            <person name="de Haan M."/>
            <person name="Maarse A.C."/>
            <person name="Schaefer M."/>
            <person name="Mueller-Auer S."/>
            <person name="Gabel C."/>
            <person name="Fuchs M."/>
            <person name="Fartmann B."/>
            <person name="Granderath K."/>
            <person name="Dauner D."/>
            <person name="Herzl A."/>
            <person name="Neumann S."/>
            <person name="Argiriou A."/>
            <person name="Vitale D."/>
            <person name="Liguori R."/>
            <person name="Piravandi E."/>
            <person name="Massenet O."/>
            <person name="Quigley F."/>
            <person name="Clabauld G."/>
            <person name="Muendlein A."/>
            <person name="Felber R."/>
            <person name="Schnabl S."/>
            <person name="Hiller R."/>
            <person name="Schmidt W."/>
            <person name="Lecharny A."/>
            <person name="Aubourg S."/>
            <person name="Chefdor F."/>
            <person name="Cooke R."/>
            <person name="Berger C."/>
            <person name="Monfort A."/>
            <person name="Casacuberta E."/>
            <person name="Gibbons T."/>
            <person name="Weber N."/>
            <person name="Vandenbol M."/>
            <person name="Bargues M."/>
            <person name="Terol J."/>
            <person name="Torres A."/>
            <person name="Perez-Perez A."/>
            <person name="Purnelle B."/>
            <person name="Bent E."/>
            <person name="Johnson S."/>
            <person name="Tacon D."/>
            <person name="Jesse T."/>
            <person name="Heijnen L."/>
            <person name="Schwarz S."/>
            <person name="Scholler P."/>
            <person name="Heber S."/>
            <person name="Francs P."/>
            <person name="Bielke C."/>
            <person name="Frishman D."/>
            <person name="Haase D."/>
            <person name="Lemcke K."/>
            <person name="Mewes H.-W."/>
            <person name="Stocker S."/>
            <person name="Zaccaria P."/>
            <person name="Bevan M."/>
            <person name="Wilson R.K."/>
            <person name="de la Bastide M."/>
            <person name="Habermann K."/>
            <person name="Parnell L."/>
            <person name="Dedhia N."/>
            <person name="Gnoj L."/>
            <person name="Schutz K."/>
            <person name="Huang E."/>
            <person name="Spiegel L."/>
            <person name="Sekhon M."/>
            <person name="Murray J."/>
            <person name="Sheet P."/>
            <person name="Cordes M."/>
            <person name="Abu-Threideh J."/>
            <person name="Stoneking T."/>
            <person name="Kalicki J."/>
            <person name="Graves T."/>
            <person name="Harmon G."/>
            <person name="Edwards J."/>
            <person name="Latreille P."/>
            <person name="Courtney L."/>
            <person name="Cloud J."/>
            <person name="Abbott A."/>
            <person name="Scott K."/>
            <person name="Johnson D."/>
            <person name="Minx P."/>
            <person name="Bentley D."/>
            <person name="Fulton B."/>
            <person name="Miller N."/>
            <person name="Greco T."/>
            <person name="Kemp K."/>
            <person name="Kramer J."/>
            <person name="Fulton L."/>
            <person name="Mardis E."/>
            <person name="Dante M."/>
            <person name="Pepin K."/>
            <person name="Hillier L.W."/>
            <person name="Nelson J."/>
            <person name="Spieth J."/>
            <person name="Ryan E."/>
            <person name="Andrews S."/>
            <person name="Geisel C."/>
            <person name="Layman D."/>
            <person name="Du H."/>
            <person name="Ali J."/>
            <person name="Berghoff A."/>
            <person name="Jones K."/>
            <person name="Drone K."/>
            <person name="Cotton M."/>
            <person name="Joshu C."/>
            <person name="Antonoiu B."/>
            <person name="Zidanic M."/>
            <person name="Strong C."/>
            <person name="Sun H."/>
            <person name="Lamar B."/>
            <person name="Yordan C."/>
            <person name="Ma P."/>
            <person name="Zhong J."/>
            <person name="Preston R."/>
            <person name="Vil D."/>
            <person name="Shekher M."/>
            <person name="Matero A."/>
            <person name="Shah R."/>
            <person name="Swaby I.K."/>
            <person name="O'Shaughnessy A."/>
            <person name="Rodriguez M."/>
            <person name="Hoffman J."/>
            <person name="Till S."/>
            <person name="Granat S."/>
            <person name="Shohdy N."/>
            <person name="Hasegawa A."/>
            <person name="Hameed A."/>
            <person name="Lodhi M."/>
            <person name="Johnson A."/>
            <person name="Chen E."/>
            <person name="Marra M.A."/>
            <person name="Martienssen R."/>
            <person name="McCombie W.R."/>
        </authorList>
    </citation>
    <scope>NUCLEOTIDE SEQUENCE [LARGE SCALE GENOMIC DNA]</scope>
    <source>
        <strain>cv. Columbia</strain>
    </source>
</reference>
<reference key="2">
    <citation type="journal article" date="2017" name="Plant J.">
        <title>Araport11: a complete reannotation of the Arabidopsis thaliana reference genome.</title>
        <authorList>
            <person name="Cheng C.Y."/>
            <person name="Krishnakumar V."/>
            <person name="Chan A.P."/>
            <person name="Thibaud-Nissen F."/>
            <person name="Schobel S."/>
            <person name="Town C.D."/>
        </authorList>
    </citation>
    <scope>GENOME REANNOTATION</scope>
    <source>
        <strain>cv. Columbia</strain>
    </source>
</reference>
<feature type="chain" id="PRO_0000382177" description="Uncharacterized protein At4g38065">
    <location>
        <begin position="1"/>
        <end position="191"/>
    </location>
</feature>
<dbReference type="EMBL" id="AL035538">
    <property type="protein sequence ID" value="CAB37547.1"/>
    <property type="status" value="ALT_SEQ"/>
    <property type="molecule type" value="Genomic_DNA"/>
</dbReference>
<dbReference type="EMBL" id="AL161592">
    <property type="protein sequence ID" value="CAB80472.1"/>
    <property type="status" value="ALT_SEQ"/>
    <property type="molecule type" value="Genomic_DNA"/>
</dbReference>
<dbReference type="EMBL" id="CP002687">
    <property type="protein sequence ID" value="ANM67032.1"/>
    <property type="molecule type" value="Genomic_DNA"/>
</dbReference>
<dbReference type="PIR" id="T05634">
    <property type="entry name" value="T05634"/>
</dbReference>
<dbReference type="RefSeq" id="NP_001328887.1">
    <property type="nucleotide sequence ID" value="NM_001342475.1"/>
</dbReference>
<dbReference type="SMR" id="P0CB24"/>
<dbReference type="ProteomicsDB" id="242855"/>
<dbReference type="EnsemblPlants" id="AT4G38065.1">
    <property type="protein sequence ID" value="AT4G38065.1"/>
    <property type="gene ID" value="AT4G38065"/>
</dbReference>
<dbReference type="GeneID" id="28720215"/>
<dbReference type="Gramene" id="AT4G38065.1">
    <property type="protein sequence ID" value="AT4G38065.1"/>
    <property type="gene ID" value="AT4G38065"/>
</dbReference>
<dbReference type="KEGG" id="ath:AT4G38065"/>
<dbReference type="Araport" id="AT4G38065"/>
<dbReference type="TAIR" id="AT4G38065"/>
<dbReference type="HOGENOM" id="CLU_248108_0_0_1"/>
<dbReference type="InParanoid" id="P0CB24"/>
<dbReference type="OMA" id="YYGMIRA"/>
<dbReference type="PRO" id="PR:P0CB24"/>
<dbReference type="Proteomes" id="UP000006548">
    <property type="component" value="Chromosome 4"/>
</dbReference>
<dbReference type="ExpressionAtlas" id="P0CB24">
    <property type="expression patterns" value="baseline and differential"/>
</dbReference>
<dbReference type="InterPro" id="IPR053052">
    <property type="entry name" value="Imprinting_Balance_Reg"/>
</dbReference>
<dbReference type="PANTHER" id="PTHR45496">
    <property type="entry name" value="CHAPERONE DNAJ-DOMAIN SUPERFAMILY PROTEIN"/>
    <property type="match status" value="1"/>
</dbReference>
<dbReference type="PANTHER" id="PTHR45496:SF32">
    <property type="entry name" value="PROTEIN ADMETOS"/>
    <property type="match status" value="1"/>
</dbReference>
<sequence>MSTREGASQNRTAPDLKPIETCRKLLKSREFLSVRYIIQVNQLLKSKRHDDDDQFEQVEAICDLLIAAENRLPNGLKDYYGMIRANRFGPVLLEDFEKLTKLLDKKHNYFPFSQEAADKASLAWSLLSKPPIKAHYDLAISAFFGECSKVKRKIFIPKKQIEVVVISDDDDEEEYGHKIISMARTARGCRS</sequence>
<proteinExistence type="predicted"/>
<protein>
    <recommendedName>
        <fullName>Uncharacterized protein At4g38065</fullName>
    </recommendedName>
</protein>
<gene>
    <name type="ordered locus">At4g38065</name>
    <name type="ORF">F20D10.190</name>
</gene>
<evidence type="ECO:0000305" key="1"/>
<comment type="sequence caution" evidence="1">
    <conflict type="erroneous gene model prediction">
        <sequence resource="EMBL-CDS" id="CAB37547"/>
    </conflict>
    <text>The predicted gene has been split into 3 genes: At4g38062, At4g38065 and At4g38070.</text>
</comment>
<comment type="sequence caution" evidence="1">
    <conflict type="erroneous gene model prediction">
        <sequence resource="EMBL-CDS" id="CAB80472"/>
    </conflict>
    <text>The predicted gene has been split into 3 genes: At4g38062, At4g38065 and At4g38070.</text>
</comment>
<name>Y4865_ARATH</name>